<organismHost>
    <name type="scientific">Equus caballus</name>
    <name type="common">Horse</name>
    <dbReference type="NCBI Taxonomy" id="9796"/>
</organismHost>
<dbReference type="EMBL" id="D00318">
    <property type="protein sequence ID" value="BAA00221.1"/>
    <property type="molecule type" value="Genomic_DNA"/>
</dbReference>
<dbReference type="GO" id="GO:0010468">
    <property type="term" value="P:regulation of gene expression"/>
    <property type="evidence" value="ECO:0007669"/>
    <property type="project" value="InterPro"/>
</dbReference>
<dbReference type="InterPro" id="IPR003403">
    <property type="entry name" value="IE68"/>
</dbReference>
<dbReference type="Pfam" id="PF02479">
    <property type="entry name" value="Herpes_IE68"/>
    <property type="match status" value="1"/>
</dbReference>
<reference key="1">
    <citation type="journal article" date="1988" name="J. Gen. Virol.">
        <title>Characterization of the genome of equine herpesvirus 1 subtype 2.</title>
        <authorList>
            <person name="Cullinane A.A."/>
            <person name="Rixon F.J."/>
            <person name="Davison A.J."/>
        </authorList>
    </citation>
    <scope>NUCLEOTIDE SEQUENCE [GENOMIC DNA]</scope>
</reference>
<comment type="similarity">
    <text evidence="2">Belongs to the herpesviridae ICP22 family.</text>
</comment>
<protein>
    <recommendedName>
        <fullName>Transcriptional regulator ICP22 homolog</fullName>
    </recommendedName>
    <alternativeName>
        <fullName>Immediate-early protein IE68</fullName>
    </alternativeName>
    <alternativeName>
        <fullName>ORF4</fullName>
    </alternativeName>
</protein>
<evidence type="ECO:0000256" key="1">
    <source>
        <dbReference type="SAM" id="MobiDB-lite"/>
    </source>
</evidence>
<evidence type="ECO:0000305" key="2"/>
<proteinExistence type="inferred from homology"/>
<sequence length="273" mass="29833">GSCRMSQRGAPSTSPIIPSLSPSSGGNPSPRSSQRIDSVRVPARLPGGSDHPEYGLPLSPRSLRPYLSRGPGAFCAPPWRPDVNRLAGDVNRLFRGISTSSIHVTEDSRVLRRVLLDFYAMGYTHARPTLECWQALLQLMPEQSLPLRATLRAINSEDKYEQRFLDPPSKPPKTLFGEECEVSGDESPSEEEEASGNSTISEFSPEEESASSDFESFSDEEDDSCCTGKWSSSESDSEADVPTNPPTTRARAAQKRRGRPVPKGGRPAKSARR</sequence>
<accession>P18346</accession>
<organism>
    <name type="scientific">Equine herpesvirus 4 (strain 1942)</name>
    <name type="common">EHV-4</name>
    <name type="synonym">Equine rhinopneumonitis virus</name>
    <dbReference type="NCBI Taxonomy" id="10333"/>
    <lineage>
        <taxon>Viruses</taxon>
        <taxon>Duplodnaviria</taxon>
        <taxon>Heunggongvirae</taxon>
        <taxon>Peploviricota</taxon>
        <taxon>Herviviricetes</taxon>
        <taxon>Herpesvirales</taxon>
        <taxon>Orthoherpesviridae</taxon>
        <taxon>Alphaherpesvirinae</taxon>
        <taxon>Varicellovirus</taxon>
        <taxon>Varicellovirus equidalpha4</taxon>
        <taxon>Equid alphaherpesvirus 4</taxon>
    </lineage>
</organism>
<keyword id="KW-0244">Early protein</keyword>
<name>ICP22_EHV4</name>
<feature type="chain" id="PRO_0000115841" description="Transcriptional regulator ICP22 homolog">
    <location>
        <begin position="1" status="less than"/>
        <end position="273"/>
    </location>
</feature>
<feature type="region of interest" description="Disordered" evidence="1">
    <location>
        <begin position="1"/>
        <end position="57"/>
    </location>
</feature>
<feature type="region of interest" description="Disordered" evidence="1">
    <location>
        <begin position="160"/>
        <end position="273"/>
    </location>
</feature>
<feature type="compositionally biased region" description="Low complexity" evidence="1">
    <location>
        <begin position="11"/>
        <end position="33"/>
    </location>
</feature>
<feature type="compositionally biased region" description="Acidic residues" evidence="1">
    <location>
        <begin position="178"/>
        <end position="194"/>
    </location>
</feature>
<feature type="compositionally biased region" description="Acidic residues" evidence="1">
    <location>
        <begin position="204"/>
        <end position="224"/>
    </location>
</feature>
<feature type="compositionally biased region" description="Low complexity" evidence="1">
    <location>
        <begin position="261"/>
        <end position="273"/>
    </location>
</feature>
<feature type="non-terminal residue">
    <location>
        <position position="1"/>
    </location>
</feature>